<evidence type="ECO:0000250" key="1">
    <source>
        <dbReference type="UniProtKB" id="Q9NQT4"/>
    </source>
</evidence>
<evidence type="ECO:0000256" key="2">
    <source>
        <dbReference type="SAM" id="MobiDB-lite"/>
    </source>
</evidence>
<evidence type="ECO:0000305" key="3"/>
<evidence type="ECO:0007744" key="4">
    <source>
    </source>
</evidence>
<proteinExistence type="evidence at protein level"/>
<comment type="function">
    <text evidence="1">Non-catalytic component of the RNA exosome complex which has 3'-&gt;5' exoribonuclease activity and participates in a multitude of cellular RNA processing and degradation events. In the nucleus, the RNA exosome complex is involved in proper maturation of stable RNA species such as rRNA, snRNA and snoRNA, in the elimination of RNA processing by-products and non-coding 'pervasive' transcripts, such as antisense RNA species and promoter-upstream transcripts (PROMPTs), and of mRNAs with processing defects, thereby limiting or excluding their export to the cytoplasm. The RNA exosome may be involved in Ig class switch recombination (CSR) and/or Ig variable region somatic hypermutation (SHM) by targeting AICDA deamination activity to transcribed dsDNA substrates. In the cytoplasm, the RNA exosome complex is involved in general mRNA turnover and specifically degrades inherently unstable mRNAs containing AU-rich elements (AREs) within their 3' untranslated regions, and in RNA surveillance pathways, preventing translation of aberrant mRNAs. It seems to be involved in degradation of histone mRNA. The catalytic inactive RNA exosome core complex of 9 subunits (Exo-9) is proposed to play a pivotal role in the binding and presentation of RNA for ribonucleolysis, and to serve as a scaffold for the association with catalytic subunits and accessory proteins or complexes (By similarity). In vitro, EXOSC5 does not bind or digest single-stranded RNA and binds to double-stranded DNA without detectable DNase activity (By similarity).</text>
</comment>
<comment type="subunit">
    <text evidence="1">Homodimer (By similarity). Component of the RNA exosome core complex (Exo-9), composed of EXOSC1, EXOSC2, EXOSC3, EXOSC4, EXOSC5, EXOSC6, EXOSC7, EXOSC8 and EXOSC9; within the complex interacts with EXOSC3, EXOSC8, and EXOSC9 (By similarity). The catalytically inactive RNA exosome core complex (Exo-9) associates with the catalytic subunit EXOSC10/RRP6 (By similarity). Exo-9 may associate with DIS3 to form the nucleolar exosome complex, or DIS3L to form the cytoplasmic exosome complex (By similarity). Exo-9 is formed by a hexameric base ring consisting of the heterodimers EXOSC4-EXOSC9, EXOSC5-EXOSC8 and EXOSC6-EXOSC7, and a cap ring consisting of EXOSC1, EXOSC2 and EXOSC3 (By similarity). The RNA exosome complex associates with cofactors C1D/RRP47, MPHOSPH6/MPP6 and MTREX/MTR4 (By similarity). Interacts with GTPBP1 (By similarity). Interacts with ZC3HAV1 (By similarity). Interacts with DDX17 only in the presence of ZC3HAV1 in an RNA-independent manner (By similarity).</text>
</comment>
<comment type="subcellular location">
    <subcellularLocation>
        <location evidence="1">Nucleus</location>
        <location evidence="1">Nucleolus</location>
    </subcellularLocation>
    <subcellularLocation>
        <location evidence="1">Cytoplasm</location>
    </subcellularLocation>
    <subcellularLocation>
        <location evidence="1">Nucleus</location>
    </subcellularLocation>
</comment>
<comment type="similarity">
    <text evidence="3">Belongs to the RNase PH family.</text>
</comment>
<sequence length="235" mass="25194">MEGAKRADANLLTDTGTESSPRSPVCSLRHFACEQNLLSRPDGSASFLQGDTSVLAGVYGPAEVKVSKEIFNKATLEVILRPKIGLPGVAEKSRERLVRNTCEAVVLGALHPRTSITVVLQVVSDAGSLLACCLNAACMALVDAGVPMRALFCGVTCALDSDGNLVLDPTTKQEKEARAILTFALDSAEQKLLMSTTKGLYSDAELQQCLAAAQAASQHIFRFYRESLQRRYSKS</sequence>
<keyword id="KW-0963">Cytoplasm</keyword>
<keyword id="KW-0238">DNA-binding</keyword>
<keyword id="KW-0271">Exosome</keyword>
<keyword id="KW-0539">Nucleus</keyword>
<keyword id="KW-0597">Phosphoprotein</keyword>
<keyword id="KW-1185">Reference proteome</keyword>
<keyword id="KW-0698">rRNA processing</keyword>
<protein>
    <recommendedName>
        <fullName>Exosome complex component RRP46</fullName>
    </recommendedName>
    <alternativeName>
        <fullName>Exosome component 5</fullName>
    </alternativeName>
    <alternativeName>
        <fullName>Ribosomal RNA-processing protein 46</fullName>
    </alternativeName>
</protein>
<gene>
    <name type="primary">Exosc5</name>
    <name type="synonym">D7Wsu180e</name>
    <name type="synonym">Rrp46</name>
</gene>
<reference key="1">
    <citation type="journal article" date="2005" name="Science">
        <title>The transcriptional landscape of the mammalian genome.</title>
        <authorList>
            <person name="Carninci P."/>
            <person name="Kasukawa T."/>
            <person name="Katayama S."/>
            <person name="Gough J."/>
            <person name="Frith M.C."/>
            <person name="Maeda N."/>
            <person name="Oyama R."/>
            <person name="Ravasi T."/>
            <person name="Lenhard B."/>
            <person name="Wells C."/>
            <person name="Kodzius R."/>
            <person name="Shimokawa K."/>
            <person name="Bajic V.B."/>
            <person name="Brenner S.E."/>
            <person name="Batalov S."/>
            <person name="Forrest A.R."/>
            <person name="Zavolan M."/>
            <person name="Davis M.J."/>
            <person name="Wilming L.G."/>
            <person name="Aidinis V."/>
            <person name="Allen J.E."/>
            <person name="Ambesi-Impiombato A."/>
            <person name="Apweiler R."/>
            <person name="Aturaliya R.N."/>
            <person name="Bailey T.L."/>
            <person name="Bansal M."/>
            <person name="Baxter L."/>
            <person name="Beisel K.W."/>
            <person name="Bersano T."/>
            <person name="Bono H."/>
            <person name="Chalk A.M."/>
            <person name="Chiu K.P."/>
            <person name="Choudhary V."/>
            <person name="Christoffels A."/>
            <person name="Clutterbuck D.R."/>
            <person name="Crowe M.L."/>
            <person name="Dalla E."/>
            <person name="Dalrymple B.P."/>
            <person name="de Bono B."/>
            <person name="Della Gatta G."/>
            <person name="di Bernardo D."/>
            <person name="Down T."/>
            <person name="Engstrom P."/>
            <person name="Fagiolini M."/>
            <person name="Faulkner G."/>
            <person name="Fletcher C.F."/>
            <person name="Fukushima T."/>
            <person name="Furuno M."/>
            <person name="Futaki S."/>
            <person name="Gariboldi M."/>
            <person name="Georgii-Hemming P."/>
            <person name="Gingeras T.R."/>
            <person name="Gojobori T."/>
            <person name="Green R.E."/>
            <person name="Gustincich S."/>
            <person name="Harbers M."/>
            <person name="Hayashi Y."/>
            <person name="Hensch T.K."/>
            <person name="Hirokawa N."/>
            <person name="Hill D."/>
            <person name="Huminiecki L."/>
            <person name="Iacono M."/>
            <person name="Ikeo K."/>
            <person name="Iwama A."/>
            <person name="Ishikawa T."/>
            <person name="Jakt M."/>
            <person name="Kanapin A."/>
            <person name="Katoh M."/>
            <person name="Kawasawa Y."/>
            <person name="Kelso J."/>
            <person name="Kitamura H."/>
            <person name="Kitano H."/>
            <person name="Kollias G."/>
            <person name="Krishnan S.P."/>
            <person name="Kruger A."/>
            <person name="Kummerfeld S.K."/>
            <person name="Kurochkin I.V."/>
            <person name="Lareau L.F."/>
            <person name="Lazarevic D."/>
            <person name="Lipovich L."/>
            <person name="Liu J."/>
            <person name="Liuni S."/>
            <person name="McWilliam S."/>
            <person name="Madan Babu M."/>
            <person name="Madera M."/>
            <person name="Marchionni L."/>
            <person name="Matsuda H."/>
            <person name="Matsuzawa S."/>
            <person name="Miki H."/>
            <person name="Mignone F."/>
            <person name="Miyake S."/>
            <person name="Morris K."/>
            <person name="Mottagui-Tabar S."/>
            <person name="Mulder N."/>
            <person name="Nakano N."/>
            <person name="Nakauchi H."/>
            <person name="Ng P."/>
            <person name="Nilsson R."/>
            <person name="Nishiguchi S."/>
            <person name="Nishikawa S."/>
            <person name="Nori F."/>
            <person name="Ohara O."/>
            <person name="Okazaki Y."/>
            <person name="Orlando V."/>
            <person name="Pang K.C."/>
            <person name="Pavan W.J."/>
            <person name="Pavesi G."/>
            <person name="Pesole G."/>
            <person name="Petrovsky N."/>
            <person name="Piazza S."/>
            <person name="Reed J."/>
            <person name="Reid J.F."/>
            <person name="Ring B.Z."/>
            <person name="Ringwald M."/>
            <person name="Rost B."/>
            <person name="Ruan Y."/>
            <person name="Salzberg S.L."/>
            <person name="Sandelin A."/>
            <person name="Schneider C."/>
            <person name="Schoenbach C."/>
            <person name="Sekiguchi K."/>
            <person name="Semple C.A."/>
            <person name="Seno S."/>
            <person name="Sessa L."/>
            <person name="Sheng Y."/>
            <person name="Shibata Y."/>
            <person name="Shimada H."/>
            <person name="Shimada K."/>
            <person name="Silva D."/>
            <person name="Sinclair B."/>
            <person name="Sperling S."/>
            <person name="Stupka E."/>
            <person name="Sugiura K."/>
            <person name="Sultana R."/>
            <person name="Takenaka Y."/>
            <person name="Taki K."/>
            <person name="Tammoja K."/>
            <person name="Tan S.L."/>
            <person name="Tang S."/>
            <person name="Taylor M.S."/>
            <person name="Tegner J."/>
            <person name="Teichmann S.A."/>
            <person name="Ueda H.R."/>
            <person name="van Nimwegen E."/>
            <person name="Verardo R."/>
            <person name="Wei C.L."/>
            <person name="Yagi K."/>
            <person name="Yamanishi H."/>
            <person name="Zabarovsky E."/>
            <person name="Zhu S."/>
            <person name="Zimmer A."/>
            <person name="Hide W."/>
            <person name="Bult C."/>
            <person name="Grimmond S.M."/>
            <person name="Teasdale R.D."/>
            <person name="Liu E.T."/>
            <person name="Brusic V."/>
            <person name="Quackenbush J."/>
            <person name="Wahlestedt C."/>
            <person name="Mattick J.S."/>
            <person name="Hume D.A."/>
            <person name="Kai C."/>
            <person name="Sasaki D."/>
            <person name="Tomaru Y."/>
            <person name="Fukuda S."/>
            <person name="Kanamori-Katayama M."/>
            <person name="Suzuki M."/>
            <person name="Aoki J."/>
            <person name="Arakawa T."/>
            <person name="Iida J."/>
            <person name="Imamura K."/>
            <person name="Itoh M."/>
            <person name="Kato T."/>
            <person name="Kawaji H."/>
            <person name="Kawagashira N."/>
            <person name="Kawashima T."/>
            <person name="Kojima M."/>
            <person name="Kondo S."/>
            <person name="Konno H."/>
            <person name="Nakano K."/>
            <person name="Ninomiya N."/>
            <person name="Nishio T."/>
            <person name="Okada M."/>
            <person name="Plessy C."/>
            <person name="Shibata K."/>
            <person name="Shiraki T."/>
            <person name="Suzuki S."/>
            <person name="Tagami M."/>
            <person name="Waki K."/>
            <person name="Watahiki A."/>
            <person name="Okamura-Oho Y."/>
            <person name="Suzuki H."/>
            <person name="Kawai J."/>
            <person name="Hayashizaki Y."/>
        </authorList>
    </citation>
    <scope>NUCLEOTIDE SEQUENCE [LARGE SCALE MRNA]</scope>
    <source>
        <strain>C57BL/6J</strain>
        <tissue>Pancreas</tissue>
        <tissue>Testis</tissue>
    </source>
</reference>
<reference key="2">
    <citation type="journal article" date="2004" name="Genome Res.">
        <title>The status, quality, and expansion of the NIH full-length cDNA project: the Mammalian Gene Collection (MGC).</title>
        <authorList>
            <consortium name="The MGC Project Team"/>
        </authorList>
    </citation>
    <scope>NUCLEOTIDE SEQUENCE [LARGE SCALE MRNA]</scope>
</reference>
<reference key="3">
    <citation type="journal article" date="2007" name="Proc. Natl. Acad. Sci. U.S.A.">
        <title>Large-scale phosphorylation analysis of mouse liver.</title>
        <authorList>
            <person name="Villen J."/>
            <person name="Beausoleil S.A."/>
            <person name="Gerber S.A."/>
            <person name="Gygi S.P."/>
        </authorList>
    </citation>
    <scope>IDENTIFICATION BY MASS SPECTROMETRY [LARGE SCALE ANALYSIS]</scope>
    <source>
        <tissue>Liver</tissue>
    </source>
</reference>
<reference key="4">
    <citation type="journal article" date="2010" name="Cell">
        <title>A tissue-specific atlas of mouse protein phosphorylation and expression.</title>
        <authorList>
            <person name="Huttlin E.L."/>
            <person name="Jedrychowski M.P."/>
            <person name="Elias J.E."/>
            <person name="Goswami T."/>
            <person name="Rad R."/>
            <person name="Beausoleil S.A."/>
            <person name="Villen J."/>
            <person name="Haas W."/>
            <person name="Sowa M.E."/>
            <person name="Gygi S.P."/>
        </authorList>
    </citation>
    <scope>PHOSPHORYLATION [LARGE SCALE ANALYSIS] AT SER-20 AND SER-23</scope>
    <scope>IDENTIFICATION BY MASS SPECTROMETRY [LARGE SCALE ANALYSIS]</scope>
    <source>
        <tissue>Kidney</tissue>
        <tissue>Liver</tissue>
        <tissue>Lung</tissue>
        <tissue>Pancreas</tissue>
        <tissue>Spleen</tissue>
        <tissue>Testis</tissue>
    </source>
</reference>
<organism>
    <name type="scientific">Mus musculus</name>
    <name type="common">Mouse</name>
    <dbReference type="NCBI Taxonomy" id="10090"/>
    <lineage>
        <taxon>Eukaryota</taxon>
        <taxon>Metazoa</taxon>
        <taxon>Chordata</taxon>
        <taxon>Craniata</taxon>
        <taxon>Vertebrata</taxon>
        <taxon>Euteleostomi</taxon>
        <taxon>Mammalia</taxon>
        <taxon>Eutheria</taxon>
        <taxon>Euarchontoglires</taxon>
        <taxon>Glires</taxon>
        <taxon>Rodentia</taxon>
        <taxon>Myomorpha</taxon>
        <taxon>Muroidea</taxon>
        <taxon>Muridae</taxon>
        <taxon>Murinae</taxon>
        <taxon>Mus</taxon>
        <taxon>Mus</taxon>
    </lineage>
</organism>
<feature type="chain" id="PRO_0000139976" description="Exosome complex component RRP46">
    <location>
        <begin position="1"/>
        <end position="235"/>
    </location>
</feature>
<feature type="region of interest" description="Disordered" evidence="2">
    <location>
        <begin position="1"/>
        <end position="21"/>
    </location>
</feature>
<feature type="compositionally biased region" description="Polar residues" evidence="2">
    <location>
        <begin position="12"/>
        <end position="21"/>
    </location>
</feature>
<feature type="modified residue" description="Phosphoserine" evidence="4">
    <location>
        <position position="20"/>
    </location>
</feature>
<feature type="modified residue" description="Phosphoserine" evidence="4">
    <location>
        <position position="23"/>
    </location>
</feature>
<feature type="sequence conflict" description="In Ref. 2; AAH34358." evidence="3" ref="2">
    <original>L</original>
    <variation>V</variation>
    <location>
        <position position="11"/>
    </location>
</feature>
<accession>Q9CRA8</accession>
<accession>Q8K1J2</accession>
<dbReference type="EMBL" id="AK007372">
    <property type="protein sequence ID" value="BAB24993.1"/>
    <property type="molecule type" value="mRNA"/>
</dbReference>
<dbReference type="EMBL" id="AK006475">
    <property type="protein sequence ID" value="BAB24607.1"/>
    <property type="molecule type" value="mRNA"/>
</dbReference>
<dbReference type="EMBL" id="BC034358">
    <property type="protein sequence ID" value="AAH34358.1"/>
    <property type="molecule type" value="mRNA"/>
</dbReference>
<dbReference type="CCDS" id="CCDS20990.1"/>
<dbReference type="RefSeq" id="NP_613052.1">
    <property type="nucleotide sequence ID" value="NM_138586.3"/>
</dbReference>
<dbReference type="SMR" id="Q9CRA8"/>
<dbReference type="BioGRID" id="205707">
    <property type="interactions" value="3"/>
</dbReference>
<dbReference type="ComplexPortal" id="CPX-594">
    <property type="entry name" value="Nuclear exosome complex, Dis3-Exosc10 variant"/>
</dbReference>
<dbReference type="ComplexPortal" id="CPX-595">
    <property type="entry name" value="Nucleolar exosome complex, Exosc10 variant"/>
</dbReference>
<dbReference type="ComplexPortal" id="CPX-596">
    <property type="entry name" value="Cytoplasmic exosome complex, Dis3l variant"/>
</dbReference>
<dbReference type="ComplexPortal" id="CPX-598">
    <property type="entry name" value="Exosome complex, Dis3 variant"/>
</dbReference>
<dbReference type="ComplexPortal" id="CPX-601">
    <property type="entry name" value="Cytoplasmic exosome complex, Dis3l-Exosc10 variant"/>
</dbReference>
<dbReference type="CORUM" id="Q9CRA8"/>
<dbReference type="FunCoup" id="Q9CRA8">
    <property type="interactions" value="1484"/>
</dbReference>
<dbReference type="IntAct" id="Q9CRA8">
    <property type="interactions" value="2"/>
</dbReference>
<dbReference type="STRING" id="10090.ENSMUSP00000145948"/>
<dbReference type="iPTMnet" id="Q9CRA8"/>
<dbReference type="PhosphoSitePlus" id="Q9CRA8"/>
<dbReference type="jPOST" id="Q9CRA8"/>
<dbReference type="PaxDb" id="10090-ENSMUSP00000078580"/>
<dbReference type="PeptideAtlas" id="Q9CRA8"/>
<dbReference type="ProteomicsDB" id="267675"/>
<dbReference type="Pumba" id="Q9CRA8"/>
<dbReference type="Antibodypedia" id="30775">
    <property type="antibodies" value="198 antibodies from 25 providers"/>
</dbReference>
<dbReference type="DNASU" id="27998"/>
<dbReference type="Ensembl" id="ENSMUST00000079634.8">
    <property type="protein sequence ID" value="ENSMUSP00000078580.7"/>
    <property type="gene ID" value="ENSMUSG00000061286.8"/>
</dbReference>
<dbReference type="Ensembl" id="ENSMUST00000206561.2">
    <property type="protein sequence ID" value="ENSMUSP00000145948.2"/>
    <property type="gene ID" value="ENSMUSG00000061286.8"/>
</dbReference>
<dbReference type="GeneID" id="27998"/>
<dbReference type="KEGG" id="mmu:27998"/>
<dbReference type="UCSC" id="uc009fti.2">
    <property type="organism name" value="mouse"/>
</dbReference>
<dbReference type="AGR" id="MGI:107889"/>
<dbReference type="CTD" id="56915"/>
<dbReference type="MGI" id="MGI:107889">
    <property type="gene designation" value="Exosc5"/>
</dbReference>
<dbReference type="VEuPathDB" id="HostDB:ENSMUSG00000061286"/>
<dbReference type="eggNOG" id="KOG1069">
    <property type="taxonomic scope" value="Eukaryota"/>
</dbReference>
<dbReference type="GeneTree" id="ENSGT00940000153348"/>
<dbReference type="HOGENOM" id="CLU_063514_2_3_1"/>
<dbReference type="InParanoid" id="Q9CRA8"/>
<dbReference type="OMA" id="CIINEQG"/>
<dbReference type="OrthoDB" id="27298at2759"/>
<dbReference type="PhylomeDB" id="Q9CRA8"/>
<dbReference type="TreeFam" id="TF315920"/>
<dbReference type="Reactome" id="R-MMU-429958">
    <property type="pathway name" value="mRNA decay by 3' to 5' exoribonuclease"/>
</dbReference>
<dbReference type="Reactome" id="R-MMU-450385">
    <property type="pathway name" value="Butyrate Response Factor 1 (BRF1) binds and destabilizes mRNA"/>
</dbReference>
<dbReference type="Reactome" id="R-MMU-450513">
    <property type="pathway name" value="Tristetraprolin (TTP, ZFP36) binds and destabilizes mRNA"/>
</dbReference>
<dbReference type="Reactome" id="R-MMU-450604">
    <property type="pathway name" value="KSRP (KHSRP) binds and destabilizes mRNA"/>
</dbReference>
<dbReference type="Reactome" id="R-MMU-6791226">
    <property type="pathway name" value="Major pathway of rRNA processing in the nucleolus and cytosol"/>
</dbReference>
<dbReference type="BioGRID-ORCS" id="27998">
    <property type="hits" value="22 hits in 78 CRISPR screens"/>
</dbReference>
<dbReference type="ChiTaRS" id="Exosc5">
    <property type="organism name" value="mouse"/>
</dbReference>
<dbReference type="PRO" id="PR:Q9CRA8"/>
<dbReference type="Proteomes" id="UP000000589">
    <property type="component" value="Chromosome 7"/>
</dbReference>
<dbReference type="RNAct" id="Q9CRA8">
    <property type="molecule type" value="protein"/>
</dbReference>
<dbReference type="Bgee" id="ENSMUSG00000061286">
    <property type="expression patterns" value="Expressed in seminiferous tubule of testis and 240 other cell types or tissues"/>
</dbReference>
<dbReference type="ExpressionAtlas" id="Q9CRA8">
    <property type="expression patterns" value="baseline and differential"/>
</dbReference>
<dbReference type="GO" id="GO:0000177">
    <property type="term" value="C:cytoplasmic exosome (RNase complex)"/>
    <property type="evidence" value="ECO:0000303"/>
    <property type="project" value="ComplexPortal"/>
</dbReference>
<dbReference type="GO" id="GO:0005829">
    <property type="term" value="C:cytosol"/>
    <property type="evidence" value="ECO:0000266"/>
    <property type="project" value="ComplexPortal"/>
</dbReference>
<dbReference type="GO" id="GO:0000791">
    <property type="term" value="C:euchromatin"/>
    <property type="evidence" value="ECO:0007669"/>
    <property type="project" value="Ensembl"/>
</dbReference>
<dbReference type="GO" id="GO:0000178">
    <property type="term" value="C:exosome (RNase complex)"/>
    <property type="evidence" value="ECO:0000250"/>
    <property type="project" value="UniProtKB"/>
</dbReference>
<dbReference type="GO" id="GO:0000176">
    <property type="term" value="C:nuclear exosome (RNase complex)"/>
    <property type="evidence" value="ECO:0000303"/>
    <property type="project" value="ComplexPortal"/>
</dbReference>
<dbReference type="GO" id="GO:0101019">
    <property type="term" value="C:nucleolar exosome (RNase complex)"/>
    <property type="evidence" value="ECO:0000303"/>
    <property type="project" value="ComplexPortal"/>
</dbReference>
<dbReference type="GO" id="GO:0005730">
    <property type="term" value="C:nucleolus"/>
    <property type="evidence" value="ECO:0000266"/>
    <property type="project" value="ComplexPortal"/>
</dbReference>
<dbReference type="GO" id="GO:0005654">
    <property type="term" value="C:nucleoplasm"/>
    <property type="evidence" value="ECO:0007669"/>
    <property type="project" value="Ensembl"/>
</dbReference>
<dbReference type="GO" id="GO:0005634">
    <property type="term" value="C:nucleus"/>
    <property type="evidence" value="ECO:0000266"/>
    <property type="project" value="ComplexPortal"/>
</dbReference>
<dbReference type="GO" id="GO:0003677">
    <property type="term" value="F:DNA binding"/>
    <property type="evidence" value="ECO:0007669"/>
    <property type="project" value="UniProtKB-KW"/>
</dbReference>
<dbReference type="GO" id="GO:0051607">
    <property type="term" value="P:defense response to virus"/>
    <property type="evidence" value="ECO:0000266"/>
    <property type="project" value="MGI"/>
</dbReference>
<dbReference type="GO" id="GO:0045006">
    <property type="term" value="P:DNA deamination"/>
    <property type="evidence" value="ECO:0007669"/>
    <property type="project" value="Ensembl"/>
</dbReference>
<dbReference type="GO" id="GO:0006402">
    <property type="term" value="P:mRNA catabolic process"/>
    <property type="evidence" value="ECO:0007669"/>
    <property type="project" value="Ensembl"/>
</dbReference>
<dbReference type="GO" id="GO:0006401">
    <property type="term" value="P:RNA catabolic process"/>
    <property type="evidence" value="ECO:0000315"/>
    <property type="project" value="MGI"/>
</dbReference>
<dbReference type="GO" id="GO:0006396">
    <property type="term" value="P:RNA processing"/>
    <property type="evidence" value="ECO:0000266"/>
    <property type="project" value="ComplexPortal"/>
</dbReference>
<dbReference type="GO" id="GO:0006364">
    <property type="term" value="P:rRNA processing"/>
    <property type="evidence" value="ECO:0007669"/>
    <property type="project" value="UniProtKB-KW"/>
</dbReference>
<dbReference type="CDD" id="cd11372">
    <property type="entry name" value="RNase_PH_RRP46"/>
    <property type="match status" value="1"/>
</dbReference>
<dbReference type="FunFam" id="3.30.230.70:FF:000012">
    <property type="entry name" value="exosome complex component RRP46"/>
    <property type="match status" value="1"/>
</dbReference>
<dbReference type="Gene3D" id="3.30.230.70">
    <property type="entry name" value="GHMP Kinase, N-terminal domain"/>
    <property type="match status" value="1"/>
</dbReference>
<dbReference type="InterPro" id="IPR001247">
    <property type="entry name" value="ExoRNase_PH_dom1"/>
</dbReference>
<dbReference type="InterPro" id="IPR015847">
    <property type="entry name" value="ExoRNase_PH_dom2"/>
</dbReference>
<dbReference type="InterPro" id="IPR036345">
    <property type="entry name" value="ExoRNase_PH_dom2_sf"/>
</dbReference>
<dbReference type="InterPro" id="IPR027408">
    <property type="entry name" value="PNPase/RNase_PH_dom_sf"/>
</dbReference>
<dbReference type="InterPro" id="IPR020568">
    <property type="entry name" value="Ribosomal_Su5_D2-typ_SF"/>
</dbReference>
<dbReference type="InterPro" id="IPR050080">
    <property type="entry name" value="RNase_PH"/>
</dbReference>
<dbReference type="PANTHER" id="PTHR11953">
    <property type="entry name" value="EXOSOME COMPLEX COMPONENT"/>
    <property type="match status" value="1"/>
</dbReference>
<dbReference type="PANTHER" id="PTHR11953:SF1">
    <property type="entry name" value="EXOSOME COMPLEX COMPONENT RRP46"/>
    <property type="match status" value="1"/>
</dbReference>
<dbReference type="Pfam" id="PF01138">
    <property type="entry name" value="RNase_PH"/>
    <property type="match status" value="1"/>
</dbReference>
<dbReference type="Pfam" id="PF03725">
    <property type="entry name" value="RNase_PH_C"/>
    <property type="match status" value="1"/>
</dbReference>
<dbReference type="SUPFAM" id="SSF55666">
    <property type="entry name" value="Ribonuclease PH domain 2-like"/>
    <property type="match status" value="1"/>
</dbReference>
<dbReference type="SUPFAM" id="SSF54211">
    <property type="entry name" value="Ribosomal protein S5 domain 2-like"/>
    <property type="match status" value="1"/>
</dbReference>
<name>EXOS5_MOUSE</name>